<organism>
    <name type="scientific">Methanocaldococcus jannaschii (strain ATCC 43067 / DSM 2661 / JAL-1 / JCM 10045 / NBRC 100440)</name>
    <name type="common">Methanococcus jannaschii</name>
    <dbReference type="NCBI Taxonomy" id="243232"/>
    <lineage>
        <taxon>Archaea</taxon>
        <taxon>Methanobacteriati</taxon>
        <taxon>Methanobacteriota</taxon>
        <taxon>Methanomada group</taxon>
        <taxon>Methanococci</taxon>
        <taxon>Methanococcales</taxon>
        <taxon>Methanocaldococcaceae</taxon>
        <taxon>Methanocaldococcus</taxon>
    </lineage>
</organism>
<protein>
    <recommendedName>
        <fullName>Uncharacterized protein MJ0334</fullName>
    </recommendedName>
</protein>
<keyword id="KW-1185">Reference proteome</keyword>
<sequence length="102" mass="11555">MSKMGLFKKEKDNGVIDDLVPKKSDYVEKIAQEAIRKDKVDALVRKHEMEQFYHEVSQNEKIAELKAELAKKEKEIEELKEEIRGLKGKAGGLGIGGSQVTR</sequence>
<name>Y334_METJA</name>
<gene>
    <name type="ordered locus">MJ0334</name>
</gene>
<reference key="1">
    <citation type="journal article" date="1996" name="Science">
        <title>Complete genome sequence of the methanogenic archaeon, Methanococcus jannaschii.</title>
        <authorList>
            <person name="Bult C.J."/>
            <person name="White O."/>
            <person name="Olsen G.J."/>
            <person name="Zhou L."/>
            <person name="Fleischmann R.D."/>
            <person name="Sutton G.G."/>
            <person name="Blake J.A."/>
            <person name="FitzGerald L.M."/>
            <person name="Clayton R.A."/>
            <person name="Gocayne J.D."/>
            <person name="Kerlavage A.R."/>
            <person name="Dougherty B.A."/>
            <person name="Tomb J.-F."/>
            <person name="Adams M.D."/>
            <person name="Reich C.I."/>
            <person name="Overbeek R."/>
            <person name="Kirkness E.F."/>
            <person name="Weinstock K.G."/>
            <person name="Merrick J.M."/>
            <person name="Glodek A."/>
            <person name="Scott J.L."/>
            <person name="Geoghagen N.S.M."/>
            <person name="Weidman J.F."/>
            <person name="Fuhrmann J.L."/>
            <person name="Nguyen D."/>
            <person name="Utterback T.R."/>
            <person name="Kelley J.M."/>
            <person name="Peterson J.D."/>
            <person name="Sadow P.W."/>
            <person name="Hanna M.C."/>
            <person name="Cotton M.D."/>
            <person name="Roberts K.M."/>
            <person name="Hurst M.A."/>
            <person name="Kaine B.P."/>
            <person name="Borodovsky M."/>
            <person name="Klenk H.-P."/>
            <person name="Fraser C.M."/>
            <person name="Smith H.O."/>
            <person name="Woese C.R."/>
            <person name="Venter J.C."/>
        </authorList>
    </citation>
    <scope>NUCLEOTIDE SEQUENCE [LARGE SCALE GENOMIC DNA]</scope>
    <source>
        <strain>ATCC 43067 / DSM 2661 / JAL-1 / JCM 10045 / NBRC 100440</strain>
    </source>
</reference>
<feature type="chain" id="PRO_0000106804" description="Uncharacterized protein MJ0334">
    <location>
        <begin position="1"/>
        <end position="102"/>
    </location>
</feature>
<dbReference type="EMBL" id="L77117">
    <property type="protein sequence ID" value="AAB98322.1"/>
    <property type="molecule type" value="Genomic_DNA"/>
</dbReference>
<dbReference type="PIR" id="F64341">
    <property type="entry name" value="F64341"/>
</dbReference>
<dbReference type="SMR" id="Q57780"/>
<dbReference type="STRING" id="243232.MJ_0334"/>
<dbReference type="PaxDb" id="243232-MJ_0334"/>
<dbReference type="EnsemblBacteria" id="AAB98322">
    <property type="protein sequence ID" value="AAB98322"/>
    <property type="gene ID" value="MJ_0334"/>
</dbReference>
<dbReference type="KEGG" id="mja:MJ_0334"/>
<dbReference type="eggNOG" id="arCOG08301">
    <property type="taxonomic scope" value="Archaea"/>
</dbReference>
<dbReference type="HOGENOM" id="CLU_176742_0_0_2"/>
<dbReference type="InParanoid" id="Q57780"/>
<dbReference type="Proteomes" id="UP000000805">
    <property type="component" value="Chromosome"/>
</dbReference>
<accession>Q57780</accession>
<proteinExistence type="predicted"/>